<proteinExistence type="inferred from homology"/>
<evidence type="ECO:0000255" key="1">
    <source>
        <dbReference type="HAMAP-Rule" id="MF_01346"/>
    </source>
</evidence>
<evidence type="ECO:0000305" key="2"/>
<organism>
    <name type="scientific">Rickettsia massiliae (strain Mtu5)</name>
    <dbReference type="NCBI Taxonomy" id="416276"/>
    <lineage>
        <taxon>Bacteria</taxon>
        <taxon>Pseudomonadati</taxon>
        <taxon>Pseudomonadota</taxon>
        <taxon>Alphaproteobacteria</taxon>
        <taxon>Rickettsiales</taxon>
        <taxon>Rickettsiaceae</taxon>
        <taxon>Rickettsieae</taxon>
        <taxon>Rickettsia</taxon>
        <taxon>spotted fever group</taxon>
    </lineage>
</organism>
<gene>
    <name evidence="1" type="primary">atpA</name>
    <name type="ordered locus">RMA_1254</name>
</gene>
<keyword id="KW-0066">ATP synthesis</keyword>
<keyword id="KW-0067">ATP-binding</keyword>
<keyword id="KW-0997">Cell inner membrane</keyword>
<keyword id="KW-1003">Cell membrane</keyword>
<keyword id="KW-0139">CF(1)</keyword>
<keyword id="KW-0375">Hydrogen ion transport</keyword>
<keyword id="KW-0406">Ion transport</keyword>
<keyword id="KW-0472">Membrane</keyword>
<keyword id="KW-0547">Nucleotide-binding</keyword>
<keyword id="KW-1278">Translocase</keyword>
<keyword id="KW-0813">Transport</keyword>
<sequence length="510" mass="55990">MKLKPIEVAEILQKEIANINCLSELEEVGQVITVGDGIAQIYGLANVKSGEVVEFKSGVKGLVLNLENDSVGAVIMGDDNQVQQGDNVKRTKEVLEVPVGKALLGRVVDALGNPIDGKGDIASKEYRHIEMKAPGIIERTSVSEPVQTGIKAIDSLIPIGRGQRELIIGDRQTGKTAIAVDTIINQKQAHSLTNESDKIYCIYVAIGQKRSSVAQIVKKLEDAGAMDYTLIVSATASEAAALQFIAPYSACSMGEYFRDNGMHALIIYDDLSKHAVAYRQISLLLRRPPGREAYPGDVFYLHSRLLERAAKMSEAKGSGSLTALPIIETQAGDVSAYIPTNVISITDGQIFLESELFYKGVRPAVNVGISVSRVGSAAQIKAMKQVAGSVKLELAQFRELESFSQFGSDLDPATKAQIDHGKRLVEILKQAQYHPFPVEEQIVSIYVGTKKYLNDVPIQKVKEFEDKMLTEIRLNKKDILESIKNEQRITEETEQKLKAFLENFVKKFVK</sequence>
<reference key="1">
    <citation type="journal article" date="2007" name="Genome Res.">
        <title>Lateral gene transfer between obligate intracellular bacteria: evidence from the Rickettsia massiliae genome.</title>
        <authorList>
            <person name="Blanc G."/>
            <person name="Ogata H."/>
            <person name="Robert C."/>
            <person name="Audic S."/>
            <person name="Claverie J.-M."/>
            <person name="Raoult D."/>
        </authorList>
    </citation>
    <scope>NUCLEOTIDE SEQUENCE [LARGE SCALE GENOMIC DNA]</scope>
    <source>
        <strain>Mtu5</strain>
    </source>
</reference>
<name>ATPA_RICM5</name>
<accession>A8F2U2</accession>
<protein>
    <recommendedName>
        <fullName evidence="1">ATP synthase subunit alpha</fullName>
        <ecNumber evidence="1">7.1.2.2</ecNumber>
    </recommendedName>
    <alternativeName>
        <fullName evidence="1">ATP synthase F1 sector subunit alpha</fullName>
    </alternativeName>
    <alternativeName>
        <fullName evidence="1">F-ATPase subunit alpha</fullName>
    </alternativeName>
</protein>
<dbReference type="EC" id="7.1.2.2" evidence="1"/>
<dbReference type="EMBL" id="CP000683">
    <property type="protein sequence ID" value="ABV85228.1"/>
    <property type="status" value="ALT_INIT"/>
    <property type="molecule type" value="Genomic_DNA"/>
</dbReference>
<dbReference type="RefSeq" id="WP_041404883.1">
    <property type="nucleotide sequence ID" value="NC_009900.1"/>
</dbReference>
<dbReference type="SMR" id="A8F2U2"/>
<dbReference type="KEGG" id="rms:RMA_1254"/>
<dbReference type="HOGENOM" id="CLU_010091_2_1_5"/>
<dbReference type="Proteomes" id="UP000001311">
    <property type="component" value="Chromosome"/>
</dbReference>
<dbReference type="GO" id="GO:0005886">
    <property type="term" value="C:plasma membrane"/>
    <property type="evidence" value="ECO:0007669"/>
    <property type="project" value="UniProtKB-SubCell"/>
</dbReference>
<dbReference type="GO" id="GO:0045259">
    <property type="term" value="C:proton-transporting ATP synthase complex"/>
    <property type="evidence" value="ECO:0007669"/>
    <property type="project" value="UniProtKB-KW"/>
</dbReference>
<dbReference type="GO" id="GO:0043531">
    <property type="term" value="F:ADP binding"/>
    <property type="evidence" value="ECO:0007669"/>
    <property type="project" value="TreeGrafter"/>
</dbReference>
<dbReference type="GO" id="GO:0005524">
    <property type="term" value="F:ATP binding"/>
    <property type="evidence" value="ECO:0007669"/>
    <property type="project" value="UniProtKB-UniRule"/>
</dbReference>
<dbReference type="GO" id="GO:0046933">
    <property type="term" value="F:proton-transporting ATP synthase activity, rotational mechanism"/>
    <property type="evidence" value="ECO:0007669"/>
    <property type="project" value="UniProtKB-UniRule"/>
</dbReference>
<dbReference type="CDD" id="cd18113">
    <property type="entry name" value="ATP-synt_F1_alpha_C"/>
    <property type="match status" value="1"/>
</dbReference>
<dbReference type="CDD" id="cd18116">
    <property type="entry name" value="ATP-synt_F1_alpha_N"/>
    <property type="match status" value="1"/>
</dbReference>
<dbReference type="CDD" id="cd01132">
    <property type="entry name" value="F1-ATPase_alpha_CD"/>
    <property type="match status" value="1"/>
</dbReference>
<dbReference type="FunFam" id="1.20.150.20:FF:000001">
    <property type="entry name" value="ATP synthase subunit alpha"/>
    <property type="match status" value="1"/>
</dbReference>
<dbReference type="FunFam" id="2.40.30.20:FF:000001">
    <property type="entry name" value="ATP synthase subunit alpha"/>
    <property type="match status" value="1"/>
</dbReference>
<dbReference type="FunFam" id="3.40.50.300:FF:002432">
    <property type="entry name" value="ATP synthase subunit alpha, mitochondrial"/>
    <property type="match status" value="1"/>
</dbReference>
<dbReference type="Gene3D" id="2.40.30.20">
    <property type="match status" value="1"/>
</dbReference>
<dbReference type="Gene3D" id="1.20.150.20">
    <property type="entry name" value="ATP synthase alpha/beta chain, C-terminal domain"/>
    <property type="match status" value="1"/>
</dbReference>
<dbReference type="Gene3D" id="3.40.50.300">
    <property type="entry name" value="P-loop containing nucleotide triphosphate hydrolases"/>
    <property type="match status" value="1"/>
</dbReference>
<dbReference type="HAMAP" id="MF_01346">
    <property type="entry name" value="ATP_synth_alpha_bact"/>
    <property type="match status" value="1"/>
</dbReference>
<dbReference type="InterPro" id="IPR023366">
    <property type="entry name" value="ATP_synth_asu-like_sf"/>
</dbReference>
<dbReference type="InterPro" id="IPR000793">
    <property type="entry name" value="ATP_synth_asu_C"/>
</dbReference>
<dbReference type="InterPro" id="IPR038376">
    <property type="entry name" value="ATP_synth_asu_C_sf"/>
</dbReference>
<dbReference type="InterPro" id="IPR033732">
    <property type="entry name" value="ATP_synth_F1_a_nt-bd_dom"/>
</dbReference>
<dbReference type="InterPro" id="IPR005294">
    <property type="entry name" value="ATP_synth_F1_asu"/>
</dbReference>
<dbReference type="InterPro" id="IPR020003">
    <property type="entry name" value="ATPase_a/bsu_AS"/>
</dbReference>
<dbReference type="InterPro" id="IPR004100">
    <property type="entry name" value="ATPase_F1/V1/A1_a/bsu_N"/>
</dbReference>
<dbReference type="InterPro" id="IPR036121">
    <property type="entry name" value="ATPase_F1/V1/A1_a/bsu_N_sf"/>
</dbReference>
<dbReference type="InterPro" id="IPR000194">
    <property type="entry name" value="ATPase_F1/V1/A1_a/bsu_nucl-bd"/>
</dbReference>
<dbReference type="InterPro" id="IPR027417">
    <property type="entry name" value="P-loop_NTPase"/>
</dbReference>
<dbReference type="NCBIfam" id="TIGR00962">
    <property type="entry name" value="atpA"/>
    <property type="match status" value="1"/>
</dbReference>
<dbReference type="NCBIfam" id="NF009884">
    <property type="entry name" value="PRK13343.1"/>
    <property type="match status" value="1"/>
</dbReference>
<dbReference type="PANTHER" id="PTHR48082">
    <property type="entry name" value="ATP SYNTHASE SUBUNIT ALPHA, MITOCHONDRIAL"/>
    <property type="match status" value="1"/>
</dbReference>
<dbReference type="PANTHER" id="PTHR48082:SF2">
    <property type="entry name" value="ATP SYNTHASE SUBUNIT ALPHA, MITOCHONDRIAL"/>
    <property type="match status" value="1"/>
</dbReference>
<dbReference type="Pfam" id="PF00006">
    <property type="entry name" value="ATP-synt_ab"/>
    <property type="match status" value="1"/>
</dbReference>
<dbReference type="Pfam" id="PF00306">
    <property type="entry name" value="ATP-synt_ab_C"/>
    <property type="match status" value="1"/>
</dbReference>
<dbReference type="Pfam" id="PF02874">
    <property type="entry name" value="ATP-synt_ab_N"/>
    <property type="match status" value="1"/>
</dbReference>
<dbReference type="PIRSF" id="PIRSF039088">
    <property type="entry name" value="F_ATPase_subunit_alpha"/>
    <property type="match status" value="1"/>
</dbReference>
<dbReference type="SUPFAM" id="SSF47917">
    <property type="entry name" value="C-terminal domain of alpha and beta subunits of F1 ATP synthase"/>
    <property type="match status" value="1"/>
</dbReference>
<dbReference type="SUPFAM" id="SSF50615">
    <property type="entry name" value="N-terminal domain of alpha and beta subunits of F1 ATP synthase"/>
    <property type="match status" value="1"/>
</dbReference>
<dbReference type="SUPFAM" id="SSF52540">
    <property type="entry name" value="P-loop containing nucleoside triphosphate hydrolases"/>
    <property type="match status" value="1"/>
</dbReference>
<dbReference type="PROSITE" id="PS00152">
    <property type="entry name" value="ATPASE_ALPHA_BETA"/>
    <property type="match status" value="1"/>
</dbReference>
<feature type="chain" id="PRO_0000339053" description="ATP synthase subunit alpha">
    <location>
        <begin position="1"/>
        <end position="510"/>
    </location>
</feature>
<feature type="binding site" evidence="1">
    <location>
        <begin position="169"/>
        <end position="176"/>
    </location>
    <ligand>
        <name>ATP</name>
        <dbReference type="ChEBI" id="CHEBI:30616"/>
    </ligand>
</feature>
<feature type="site" description="Required for activity" evidence="1">
    <location>
        <position position="370"/>
    </location>
</feature>
<comment type="function">
    <text evidence="1">Produces ATP from ADP in the presence of a proton gradient across the membrane. The alpha chain is a regulatory subunit.</text>
</comment>
<comment type="catalytic activity">
    <reaction evidence="1">
        <text>ATP + H2O + 4 H(+)(in) = ADP + phosphate + 5 H(+)(out)</text>
        <dbReference type="Rhea" id="RHEA:57720"/>
        <dbReference type="ChEBI" id="CHEBI:15377"/>
        <dbReference type="ChEBI" id="CHEBI:15378"/>
        <dbReference type="ChEBI" id="CHEBI:30616"/>
        <dbReference type="ChEBI" id="CHEBI:43474"/>
        <dbReference type="ChEBI" id="CHEBI:456216"/>
        <dbReference type="EC" id="7.1.2.2"/>
    </reaction>
</comment>
<comment type="subunit">
    <text evidence="1">F-type ATPases have 2 components, CF(1) - the catalytic core - and CF(0) - the membrane proton channel. CF(1) has five subunits: alpha(3), beta(3), gamma(1), delta(1), epsilon(1). CF(0) has three main subunits: a(1), b(2) and c(9-12). The alpha and beta chains form an alternating ring which encloses part of the gamma chain. CF(1) is attached to CF(0) by a central stalk formed by the gamma and epsilon chains, while a peripheral stalk is formed by the delta and b chains.</text>
</comment>
<comment type="subcellular location">
    <subcellularLocation>
        <location evidence="1">Cell inner membrane</location>
        <topology evidence="1">Peripheral membrane protein</topology>
    </subcellularLocation>
</comment>
<comment type="similarity">
    <text evidence="1">Belongs to the ATPase alpha/beta chains family.</text>
</comment>
<comment type="sequence caution" evidence="2">
    <conflict type="erroneous initiation">
        <sequence resource="EMBL-CDS" id="ABV85228"/>
    </conflict>
</comment>